<keyword id="KW-1003">Cell membrane</keyword>
<keyword id="KW-0472">Membrane</keyword>
<keyword id="KW-0808">Transferase</keyword>
<keyword id="KW-0812">Transmembrane</keyword>
<keyword id="KW-1133">Transmembrane helix</keyword>
<name>LGT_STRPI</name>
<sequence length="262" mass="30259">MLDPIAIQLGPLAIRWYALCIVTGLILAVYLTMKEAPRKKIIPDDILDFILVAFPLAILGARLYYVIFRFDYYSQNLGEIFAIWNGGLAIYGGLITGALVLYIFADRKLINTWDFLDIAAPSVMIAQSLGRWGNFFNQEAYGATVDNLDYLPGFIRDQMYIEGSYRQPTFLYESLWNLLGFALILIFRRKWKSLRRGHITAFYLIWYGFGRMVIEGMRTDSLMFFGLRVSQWLSVVLIGLGIMIVIYQNRKKAPYYITEEEN</sequence>
<accession>B1ICL2</accession>
<proteinExistence type="inferred from homology"/>
<reference key="1">
    <citation type="journal article" date="2010" name="Genome Biol.">
        <title>Structure and dynamics of the pan-genome of Streptococcus pneumoniae and closely related species.</title>
        <authorList>
            <person name="Donati C."/>
            <person name="Hiller N.L."/>
            <person name="Tettelin H."/>
            <person name="Muzzi A."/>
            <person name="Croucher N.J."/>
            <person name="Angiuoli S.V."/>
            <person name="Oggioni M."/>
            <person name="Dunning Hotopp J.C."/>
            <person name="Hu F.Z."/>
            <person name="Riley D.R."/>
            <person name="Covacci A."/>
            <person name="Mitchell T.J."/>
            <person name="Bentley S.D."/>
            <person name="Kilian M."/>
            <person name="Ehrlich G.D."/>
            <person name="Rappuoli R."/>
            <person name="Moxon E.R."/>
            <person name="Masignani V."/>
        </authorList>
    </citation>
    <scope>NUCLEOTIDE SEQUENCE [LARGE SCALE GENOMIC DNA]</scope>
    <source>
        <strain>Hungary19A-6</strain>
    </source>
</reference>
<comment type="function">
    <text evidence="1">Catalyzes the transfer of the diacylglyceryl group from phosphatidylglycerol to the sulfhydryl group of the N-terminal cysteine of a prolipoprotein, the first step in the formation of mature lipoproteins.</text>
</comment>
<comment type="catalytic activity">
    <reaction evidence="1">
        <text>L-cysteinyl-[prolipoprotein] + a 1,2-diacyl-sn-glycero-3-phospho-(1'-sn-glycerol) = an S-1,2-diacyl-sn-glyceryl-L-cysteinyl-[prolipoprotein] + sn-glycerol 1-phosphate + H(+)</text>
        <dbReference type="Rhea" id="RHEA:56712"/>
        <dbReference type="Rhea" id="RHEA-COMP:14679"/>
        <dbReference type="Rhea" id="RHEA-COMP:14680"/>
        <dbReference type="ChEBI" id="CHEBI:15378"/>
        <dbReference type="ChEBI" id="CHEBI:29950"/>
        <dbReference type="ChEBI" id="CHEBI:57685"/>
        <dbReference type="ChEBI" id="CHEBI:64716"/>
        <dbReference type="ChEBI" id="CHEBI:140658"/>
        <dbReference type="EC" id="2.5.1.145"/>
    </reaction>
</comment>
<comment type="pathway">
    <text evidence="1">Protein modification; lipoprotein biosynthesis (diacylglyceryl transfer).</text>
</comment>
<comment type="subcellular location">
    <subcellularLocation>
        <location evidence="1">Cell membrane</location>
        <topology evidence="1">Multi-pass membrane protein</topology>
    </subcellularLocation>
</comment>
<comment type="similarity">
    <text evidence="1">Belongs to the Lgt family.</text>
</comment>
<evidence type="ECO:0000255" key="1">
    <source>
        <dbReference type="HAMAP-Rule" id="MF_01147"/>
    </source>
</evidence>
<gene>
    <name evidence="1" type="primary">lgt</name>
    <name type="ordered locus">SPH_1543</name>
</gene>
<dbReference type="EC" id="2.5.1.145" evidence="1"/>
<dbReference type="EMBL" id="CP000936">
    <property type="protein sequence ID" value="ACA37109.1"/>
    <property type="molecule type" value="Genomic_DNA"/>
</dbReference>
<dbReference type="RefSeq" id="WP_000886663.1">
    <property type="nucleotide sequence ID" value="NC_010380.1"/>
</dbReference>
<dbReference type="SMR" id="B1ICL2"/>
<dbReference type="GeneID" id="45653330"/>
<dbReference type="KEGG" id="spv:SPH_1543"/>
<dbReference type="HOGENOM" id="CLU_013386_0_1_9"/>
<dbReference type="UniPathway" id="UPA00664"/>
<dbReference type="Proteomes" id="UP000002163">
    <property type="component" value="Chromosome"/>
</dbReference>
<dbReference type="GO" id="GO:0005886">
    <property type="term" value="C:plasma membrane"/>
    <property type="evidence" value="ECO:0007669"/>
    <property type="project" value="UniProtKB-SubCell"/>
</dbReference>
<dbReference type="GO" id="GO:0008961">
    <property type="term" value="F:phosphatidylglycerol-prolipoprotein diacylglyceryl transferase activity"/>
    <property type="evidence" value="ECO:0007669"/>
    <property type="project" value="UniProtKB-UniRule"/>
</dbReference>
<dbReference type="GO" id="GO:0042158">
    <property type="term" value="P:lipoprotein biosynthetic process"/>
    <property type="evidence" value="ECO:0007669"/>
    <property type="project" value="UniProtKB-UniRule"/>
</dbReference>
<dbReference type="HAMAP" id="MF_01147">
    <property type="entry name" value="Lgt"/>
    <property type="match status" value="1"/>
</dbReference>
<dbReference type="InterPro" id="IPR001640">
    <property type="entry name" value="Lgt"/>
</dbReference>
<dbReference type="NCBIfam" id="TIGR00544">
    <property type="entry name" value="lgt"/>
    <property type="match status" value="1"/>
</dbReference>
<dbReference type="PANTHER" id="PTHR30589:SF0">
    <property type="entry name" value="PHOSPHATIDYLGLYCEROL--PROLIPOPROTEIN DIACYLGLYCERYL TRANSFERASE"/>
    <property type="match status" value="1"/>
</dbReference>
<dbReference type="PANTHER" id="PTHR30589">
    <property type="entry name" value="PROLIPOPROTEIN DIACYLGLYCERYL TRANSFERASE"/>
    <property type="match status" value="1"/>
</dbReference>
<dbReference type="Pfam" id="PF01790">
    <property type="entry name" value="LGT"/>
    <property type="match status" value="1"/>
</dbReference>
<dbReference type="PROSITE" id="PS01311">
    <property type="entry name" value="LGT"/>
    <property type="match status" value="1"/>
</dbReference>
<feature type="chain" id="PRO_1000137465" description="Phosphatidylglycerol--prolipoprotein diacylglyceryl transferase">
    <location>
        <begin position="1"/>
        <end position="262"/>
    </location>
</feature>
<feature type="transmembrane region" description="Helical" evidence="1">
    <location>
        <begin position="9"/>
        <end position="29"/>
    </location>
</feature>
<feature type="transmembrane region" description="Helical" evidence="1">
    <location>
        <begin position="41"/>
        <end position="61"/>
    </location>
</feature>
<feature type="transmembrane region" description="Helical" evidence="1">
    <location>
        <begin position="80"/>
        <end position="100"/>
    </location>
</feature>
<feature type="transmembrane region" description="Helical" evidence="1">
    <location>
        <begin position="109"/>
        <end position="129"/>
    </location>
</feature>
<feature type="transmembrane region" description="Helical" evidence="1">
    <location>
        <begin position="167"/>
        <end position="187"/>
    </location>
</feature>
<feature type="transmembrane region" description="Helical" evidence="1">
    <location>
        <begin position="197"/>
        <end position="217"/>
    </location>
</feature>
<feature type="transmembrane region" description="Helical" evidence="1">
    <location>
        <begin position="226"/>
        <end position="246"/>
    </location>
</feature>
<feature type="binding site" evidence="1">
    <location>
        <position position="131"/>
    </location>
    <ligand>
        <name>a 1,2-diacyl-sn-glycero-3-phospho-(1'-sn-glycerol)</name>
        <dbReference type="ChEBI" id="CHEBI:64716"/>
    </ligand>
</feature>
<protein>
    <recommendedName>
        <fullName evidence="1">Phosphatidylglycerol--prolipoprotein diacylglyceryl transferase</fullName>
        <ecNumber evidence="1">2.5.1.145</ecNumber>
    </recommendedName>
</protein>
<organism>
    <name type="scientific">Streptococcus pneumoniae (strain Hungary19A-6)</name>
    <dbReference type="NCBI Taxonomy" id="487214"/>
    <lineage>
        <taxon>Bacteria</taxon>
        <taxon>Bacillati</taxon>
        <taxon>Bacillota</taxon>
        <taxon>Bacilli</taxon>
        <taxon>Lactobacillales</taxon>
        <taxon>Streptococcaceae</taxon>
        <taxon>Streptococcus</taxon>
    </lineage>
</organism>